<keyword id="KW-0903">Direct protein sequencing</keyword>
<keyword id="KW-1015">Disulfide bond</keyword>
<keyword id="KW-0872">Ion channel impairing toxin</keyword>
<keyword id="KW-0528">Neurotoxin</keyword>
<keyword id="KW-0964">Secreted</keyword>
<keyword id="KW-0800">Toxin</keyword>
<keyword id="KW-0738">Voltage-gated sodium channel impairing toxin</keyword>
<organism>
    <name type="scientific">Tityus metuendus</name>
    <name type="common">Scorpion</name>
    <dbReference type="NCBI Taxonomy" id="2203750"/>
    <lineage>
        <taxon>Eukaryota</taxon>
        <taxon>Metazoa</taxon>
        <taxon>Ecdysozoa</taxon>
        <taxon>Arthropoda</taxon>
        <taxon>Chelicerata</taxon>
        <taxon>Arachnida</taxon>
        <taxon>Scorpiones</taxon>
        <taxon>Buthida</taxon>
        <taxon>Buthoidea</taxon>
        <taxon>Buthidae</taxon>
        <taxon>Tityus</taxon>
    </lineage>
</organism>
<protein>
    <recommendedName>
        <fullName>Sodium channel toxin</fullName>
    </recommendedName>
</protein>
<dbReference type="SMR" id="P0DQU6"/>
<dbReference type="GO" id="GO:0005576">
    <property type="term" value="C:extracellular region"/>
    <property type="evidence" value="ECO:0007669"/>
    <property type="project" value="UniProtKB-SubCell"/>
</dbReference>
<dbReference type="GO" id="GO:0019871">
    <property type="term" value="F:sodium channel inhibitor activity"/>
    <property type="evidence" value="ECO:0007669"/>
    <property type="project" value="InterPro"/>
</dbReference>
<dbReference type="GO" id="GO:0090729">
    <property type="term" value="F:toxin activity"/>
    <property type="evidence" value="ECO:0007669"/>
    <property type="project" value="UniProtKB-KW"/>
</dbReference>
<dbReference type="GO" id="GO:0006952">
    <property type="term" value="P:defense response"/>
    <property type="evidence" value="ECO:0007669"/>
    <property type="project" value="InterPro"/>
</dbReference>
<dbReference type="CDD" id="cd23106">
    <property type="entry name" value="neurotoxins_LC_scorpion"/>
    <property type="match status" value="1"/>
</dbReference>
<dbReference type="Gene3D" id="3.30.30.10">
    <property type="entry name" value="Knottin, scorpion toxin-like"/>
    <property type="match status" value="1"/>
</dbReference>
<dbReference type="InterPro" id="IPR044062">
    <property type="entry name" value="LCN-type_CS_alpha_beta_dom"/>
</dbReference>
<dbReference type="InterPro" id="IPR003614">
    <property type="entry name" value="Scorpion_toxin-like"/>
</dbReference>
<dbReference type="InterPro" id="IPR036574">
    <property type="entry name" value="Scorpion_toxin-like_sf"/>
</dbReference>
<dbReference type="InterPro" id="IPR018218">
    <property type="entry name" value="Scorpion_toxinL"/>
</dbReference>
<dbReference type="InterPro" id="IPR002061">
    <property type="entry name" value="Scorpion_toxinL/defensin"/>
</dbReference>
<dbReference type="Pfam" id="PF00537">
    <property type="entry name" value="Toxin_3"/>
    <property type="match status" value="1"/>
</dbReference>
<dbReference type="PRINTS" id="PR00285">
    <property type="entry name" value="SCORPNTOXIN"/>
</dbReference>
<dbReference type="SMART" id="SM00505">
    <property type="entry name" value="Knot1"/>
    <property type="match status" value="1"/>
</dbReference>
<dbReference type="SUPFAM" id="SSF57095">
    <property type="entry name" value="Scorpion toxin-like"/>
    <property type="match status" value="1"/>
</dbReference>
<dbReference type="PROSITE" id="PS51863">
    <property type="entry name" value="LCN_CSAB"/>
    <property type="match status" value="1"/>
</dbReference>
<comment type="function">
    <text evidence="1">Inhibits voltage-gated sodium channels (Nav).</text>
</comment>
<comment type="subcellular location">
    <subcellularLocation>
        <location evidence="3">Secreted</location>
    </subcellularLocation>
</comment>
<comment type="tissue specificity">
    <text evidence="5">Expressed by the venom gland.</text>
</comment>
<comment type="domain">
    <text evidence="1">Has the structural arrangement of an alpha-helix connected to antiparallel beta-sheets by disulfide bonds (CS-alpha/beta).</text>
</comment>
<comment type="mass spectrometry" mass="7796.19" method="Electrospray" evidence="3">
    <text>Average mass.</text>
</comment>
<comment type="similarity">
    <text evidence="4">Belongs to the long (4 C-C) scorpion toxin superfamily. Sodium channel inhibitor family.</text>
</comment>
<accession>P0DQU6</accession>
<name>SCX_TITME</name>
<sequence length="69" mass="7804">KKNDYPVDTAKRNCMLDCNVWDDEGYCDNFCKGRKAESGYCYKLKAACYCYGLPDDSPTKTSGRCNPNV</sequence>
<proteinExistence type="evidence at protein level"/>
<evidence type="ECO:0000250" key="1">
    <source>
        <dbReference type="UniProtKB" id="H1ZZI3"/>
    </source>
</evidence>
<evidence type="ECO:0000255" key="2">
    <source>
        <dbReference type="PROSITE-ProRule" id="PRU01210"/>
    </source>
</evidence>
<evidence type="ECO:0000269" key="3">
    <source>
    </source>
</evidence>
<evidence type="ECO:0000305" key="4"/>
<evidence type="ECO:0000305" key="5">
    <source>
    </source>
</evidence>
<reference key="1">
    <citation type="journal article" date="2018" name="Toxicon">
        <title>Venom characterization of the Amazonian scorpion Tityus metuendus.</title>
        <authorList>
            <person name="Batista C.V.F."/>
            <person name="Martins J.G."/>
            <person name="Restano-Cassulini R."/>
            <person name="Coronas F.I.V."/>
            <person name="Zamudio F.Z."/>
            <person name="Procopio R."/>
            <person name="Possani L.D."/>
        </authorList>
    </citation>
    <scope>PROTEIN SEQUENCE</scope>
    <scope>MASS SPECTROMETRY</scope>
    <scope>SUBCELLULAR LOCATION</scope>
    <source>
        <tissue>Venom</tissue>
    </source>
</reference>
<feature type="chain" id="PRO_0000455694" description="Sodium channel toxin">
    <location>
        <begin position="1"/>
        <end position="69"/>
    </location>
</feature>
<feature type="domain" description="LCN-type CS-alpha/beta" evidence="2">
    <location>
        <begin position="2"/>
        <end position="66"/>
    </location>
</feature>
<feature type="disulfide bond" evidence="2">
    <location>
        <begin position="14"/>
        <end position="65"/>
    </location>
</feature>
<feature type="disulfide bond" evidence="2">
    <location>
        <begin position="18"/>
        <end position="41"/>
    </location>
</feature>
<feature type="disulfide bond" evidence="2">
    <location>
        <begin position="27"/>
        <end position="48"/>
    </location>
</feature>
<feature type="disulfide bond" evidence="2">
    <location>
        <begin position="31"/>
        <end position="50"/>
    </location>
</feature>